<sequence>MSSSMWYIMQSIQSKYSLSERLIRTIAAIRSFPHDNVEDLIRGGADVNCTHGTLKPLHCACMVSDADCVELLLEKGAEVNALDGYNRTVLHYAAEKDEACVEVLLEYGANPNALDGNRDTPLHWAAFKNNAECVRALLESGASVNALDYNNDTPLSWAAMKGNLESVSILLDYGAEVRVINLIGQTPISRLVALLVRGLGTEKEDSCFELLHRAVGHFELRKNGTMPREVARDPQLCEKLTVLCSAPGTLKTLARYAVRRSLGLQYLPDAVKGLPLPASLKEYLLLLE</sequence>
<dbReference type="EMBL" id="AB169700">
    <property type="protein sequence ID" value="BAE01781.1"/>
    <property type="molecule type" value="mRNA"/>
</dbReference>
<dbReference type="SMR" id="Q4R544"/>
<dbReference type="STRING" id="9541.ENSMFAP00000005058"/>
<dbReference type="eggNOG" id="KOG0504">
    <property type="taxonomic scope" value="Eukaryota"/>
</dbReference>
<dbReference type="UniPathway" id="UPA00143"/>
<dbReference type="Proteomes" id="UP000233100">
    <property type="component" value="Unplaced"/>
</dbReference>
<dbReference type="GO" id="GO:0005737">
    <property type="term" value="C:cytoplasm"/>
    <property type="evidence" value="ECO:0007669"/>
    <property type="project" value="UniProtKB-SubCell"/>
</dbReference>
<dbReference type="GO" id="GO:0035556">
    <property type="term" value="P:intracellular signal transduction"/>
    <property type="evidence" value="ECO:0007669"/>
    <property type="project" value="InterPro"/>
</dbReference>
<dbReference type="GO" id="GO:0016567">
    <property type="term" value="P:protein ubiquitination"/>
    <property type="evidence" value="ECO:0007669"/>
    <property type="project" value="UniProtKB-UniPathway"/>
</dbReference>
<dbReference type="CDD" id="cd03727">
    <property type="entry name" value="SOCS_ASB8"/>
    <property type="match status" value="1"/>
</dbReference>
<dbReference type="FunFam" id="1.10.750.20:FF:000001">
    <property type="entry name" value="Ankyrin repeat and SOCS box containing 1"/>
    <property type="match status" value="1"/>
</dbReference>
<dbReference type="FunFam" id="1.25.40.20:FF:000274">
    <property type="entry name" value="Ankyrin repeat and SOCS box containing 8"/>
    <property type="match status" value="1"/>
</dbReference>
<dbReference type="Gene3D" id="1.25.40.20">
    <property type="entry name" value="Ankyrin repeat-containing domain"/>
    <property type="match status" value="2"/>
</dbReference>
<dbReference type="Gene3D" id="1.10.750.20">
    <property type="entry name" value="SOCS box"/>
    <property type="match status" value="1"/>
</dbReference>
<dbReference type="InterPro" id="IPR002110">
    <property type="entry name" value="Ankyrin_rpt"/>
</dbReference>
<dbReference type="InterPro" id="IPR036770">
    <property type="entry name" value="Ankyrin_rpt-contain_sf"/>
</dbReference>
<dbReference type="InterPro" id="IPR037332">
    <property type="entry name" value="ASB8_SOCS"/>
</dbReference>
<dbReference type="InterPro" id="IPR001496">
    <property type="entry name" value="SOCS_box"/>
</dbReference>
<dbReference type="InterPro" id="IPR036036">
    <property type="entry name" value="SOCS_box-like_dom_sf"/>
</dbReference>
<dbReference type="PANTHER" id="PTHR24134:SF9">
    <property type="entry name" value="ANKYRIN REPEAT AND SOCS BOX PROTEIN 8"/>
    <property type="match status" value="1"/>
</dbReference>
<dbReference type="PANTHER" id="PTHR24134">
    <property type="entry name" value="ANKYRIN REPEAT-CONTAINING PROTEIN DDB_G0279043"/>
    <property type="match status" value="1"/>
</dbReference>
<dbReference type="Pfam" id="PF12796">
    <property type="entry name" value="Ank_2"/>
    <property type="match status" value="1"/>
</dbReference>
<dbReference type="Pfam" id="PF13637">
    <property type="entry name" value="Ank_4"/>
    <property type="match status" value="1"/>
</dbReference>
<dbReference type="Pfam" id="PF07525">
    <property type="entry name" value="SOCS_box"/>
    <property type="match status" value="1"/>
</dbReference>
<dbReference type="SMART" id="SM00248">
    <property type="entry name" value="ANK"/>
    <property type="match status" value="4"/>
</dbReference>
<dbReference type="SMART" id="SM00969">
    <property type="entry name" value="SOCS_box"/>
    <property type="match status" value="1"/>
</dbReference>
<dbReference type="SUPFAM" id="SSF48403">
    <property type="entry name" value="Ankyrin repeat"/>
    <property type="match status" value="1"/>
</dbReference>
<dbReference type="SUPFAM" id="SSF158235">
    <property type="entry name" value="SOCS box-like"/>
    <property type="match status" value="1"/>
</dbReference>
<dbReference type="PROSITE" id="PS50297">
    <property type="entry name" value="ANK_REP_REGION"/>
    <property type="match status" value="1"/>
</dbReference>
<dbReference type="PROSITE" id="PS50088">
    <property type="entry name" value="ANK_REPEAT"/>
    <property type="match status" value="3"/>
</dbReference>
<dbReference type="PROSITE" id="PS50225">
    <property type="entry name" value="SOCS"/>
    <property type="match status" value="1"/>
</dbReference>
<name>ASB8_MACFA</name>
<comment type="function">
    <text evidence="2">May be a substrate-recognition component of a SCF-like ECS (Elongin-Cullin-SOCS-box protein) E3 ubiquitin-protein ligase complex which mediates the ubiquitination and subsequent proteasomal degradation of target proteins. Inhibits IFN-beta production through the IRF3 signaling pathway by targeting TBK1 via 'Lys-48'-linked ubiquitination, leading to its proteasomal degradation.</text>
</comment>
<comment type="pathway">
    <text>Protein modification; protein ubiquitination.</text>
</comment>
<comment type="subunit">
    <text evidence="2">Interacts with TBK1; this interaction promotes TBK1 proteasomal degradation.</text>
</comment>
<comment type="subcellular location">
    <subcellularLocation>
        <location evidence="2">Cytoplasm</location>
    </subcellularLocation>
</comment>
<comment type="domain">
    <text evidence="1">The SOCS box domain mediates the interaction with the Elongin BC complex, an adapter module in different E3 ubiquitin-protein ligase complexes.</text>
</comment>
<comment type="PTM">
    <text evidence="2">Phosphorylated by TBK1.</text>
</comment>
<comment type="similarity">
    <text evidence="4">Belongs to the ankyrin SOCS box (ASB) family.</text>
</comment>
<organism>
    <name type="scientific">Macaca fascicularis</name>
    <name type="common">Crab-eating macaque</name>
    <name type="synonym">Cynomolgus monkey</name>
    <dbReference type="NCBI Taxonomy" id="9541"/>
    <lineage>
        <taxon>Eukaryota</taxon>
        <taxon>Metazoa</taxon>
        <taxon>Chordata</taxon>
        <taxon>Craniata</taxon>
        <taxon>Vertebrata</taxon>
        <taxon>Euteleostomi</taxon>
        <taxon>Mammalia</taxon>
        <taxon>Eutheria</taxon>
        <taxon>Euarchontoglires</taxon>
        <taxon>Primates</taxon>
        <taxon>Haplorrhini</taxon>
        <taxon>Catarrhini</taxon>
        <taxon>Cercopithecidae</taxon>
        <taxon>Cercopithecinae</taxon>
        <taxon>Macaca</taxon>
    </lineage>
</organism>
<proteinExistence type="evidence at transcript level"/>
<feature type="chain" id="PRO_0000285852" description="Ankyrin repeat and SOCS box protein 8">
    <location>
        <begin position="1"/>
        <end position="288"/>
    </location>
</feature>
<feature type="repeat" description="ANK 1">
    <location>
        <begin position="52"/>
        <end position="81"/>
    </location>
</feature>
<feature type="repeat" description="ANK 2">
    <location>
        <begin position="85"/>
        <end position="113"/>
    </location>
</feature>
<feature type="repeat" description="ANK 3">
    <location>
        <begin position="117"/>
        <end position="146"/>
    </location>
</feature>
<feature type="repeat" description="ANK 4">
    <location>
        <begin position="150"/>
        <end position="179"/>
    </location>
</feature>
<feature type="domain" description="SOCS box" evidence="3">
    <location>
        <begin position="235"/>
        <end position="288"/>
    </location>
</feature>
<feature type="modified residue" description="Phosphoserine" evidence="2">
    <location>
        <position position="17"/>
    </location>
</feature>
<keyword id="KW-0040">ANK repeat</keyword>
<keyword id="KW-0963">Cytoplasm</keyword>
<keyword id="KW-0597">Phosphoprotein</keyword>
<keyword id="KW-1185">Reference proteome</keyword>
<keyword id="KW-0677">Repeat</keyword>
<keyword id="KW-0833">Ubl conjugation pathway</keyword>
<protein>
    <recommendedName>
        <fullName>Ankyrin repeat and SOCS box protein 8</fullName>
        <shortName>ASB-8</shortName>
    </recommendedName>
</protein>
<reference key="1">
    <citation type="submission" date="2005-06" db="EMBL/GenBank/DDBJ databases">
        <title>DNA sequences of macaque genes expressed in brain or testis and its evolutionary implications.</title>
        <authorList>
            <consortium name="International consortium for macaque cDNA sequencing and analysis"/>
        </authorList>
    </citation>
    <scope>NUCLEOTIDE SEQUENCE [LARGE SCALE MRNA]</scope>
    <source>
        <tissue>Brain cortex</tissue>
    </source>
</reference>
<accession>Q4R544</accession>
<gene>
    <name type="primary">ASB8</name>
    <name type="ORF">QccE-19709</name>
</gene>
<evidence type="ECO:0000250" key="1"/>
<evidence type="ECO:0000250" key="2">
    <source>
        <dbReference type="UniProtKB" id="Q9H765"/>
    </source>
</evidence>
<evidence type="ECO:0000255" key="3">
    <source>
        <dbReference type="PROSITE-ProRule" id="PRU00194"/>
    </source>
</evidence>
<evidence type="ECO:0000305" key="4"/>